<organism>
    <name type="scientific">Rickettsia bellii (strain RML369-C)</name>
    <dbReference type="NCBI Taxonomy" id="336407"/>
    <lineage>
        <taxon>Bacteria</taxon>
        <taxon>Pseudomonadati</taxon>
        <taxon>Pseudomonadota</taxon>
        <taxon>Alphaproteobacteria</taxon>
        <taxon>Rickettsiales</taxon>
        <taxon>Rickettsiaceae</taxon>
        <taxon>Rickettsieae</taxon>
        <taxon>Rickettsia</taxon>
        <taxon>belli group</taxon>
    </lineage>
</organism>
<sequence>MIITVNSPIASRLDKYLRRLYPLLTQGVIEKALRQKQIIVNSKKAEASLRVVEGDEIFIHDKFNLPIAQPTKLVFTDAEITLAKKITTEYLIYEDDNIIAINKPAGLATQGGSKINLSVDSALKYLNSQGADFKLVHRLDKETSGLLLIAKNYVSSVKLHDAFKEKLVEKTYLAVTYGKPIKDQGEVKTNIEKSKGSIPKITDINDNNGKLAITYYKLLKSLTNNLFLVEFIPITGRMHQLRLHAKLLGCPIFGDNKYGNDKLMPYSKYMFLHANNIVLSKKVFGKEVNLEAKLPSYFNRV</sequence>
<proteinExistence type="inferred from homology"/>
<name>RLUC_RICBR</name>
<accession>Q1RJX7</accession>
<keyword id="KW-0413">Isomerase</keyword>
<keyword id="KW-0694">RNA-binding</keyword>
<keyword id="KW-0698">rRNA processing</keyword>
<protein>
    <recommendedName>
        <fullName>Ribosomal large subunit pseudouridine synthase C</fullName>
        <ecNumber>5.4.99.24</ecNumber>
    </recommendedName>
    <alternativeName>
        <fullName>23S rRNA pseudouridine(955/2504/2580) synthase</fullName>
    </alternativeName>
    <alternativeName>
        <fullName>rRNA pseudouridylate synthase C</fullName>
    </alternativeName>
    <alternativeName>
        <fullName>rRNA-uridine isomerase C</fullName>
    </alternativeName>
</protein>
<feature type="chain" id="PRO_0000286664" description="Ribosomal large subunit pseudouridine synthase C">
    <location>
        <begin position="1"/>
        <end position="301"/>
    </location>
</feature>
<feature type="domain" description="S4 RNA-binding" evidence="2">
    <location>
        <begin position="11"/>
        <end position="70"/>
    </location>
</feature>
<feature type="active site" evidence="1">
    <location>
        <position position="140"/>
    </location>
</feature>
<evidence type="ECO:0000250" key="1"/>
<evidence type="ECO:0000255" key="2">
    <source>
        <dbReference type="PROSITE-ProRule" id="PRU00182"/>
    </source>
</evidence>
<evidence type="ECO:0000305" key="3"/>
<comment type="function">
    <text evidence="1">Responsible for synthesis of pseudouridine from uracil at positions 955, 2504 and 2580 in 23S ribosomal RNA.</text>
</comment>
<comment type="catalytic activity">
    <reaction>
        <text>uridine(955/2504/2580) in 23S rRNA = pseudouridine(955/2504/2580) in 23S rRNA</text>
        <dbReference type="Rhea" id="RHEA:42528"/>
        <dbReference type="Rhea" id="RHEA-COMP:10099"/>
        <dbReference type="Rhea" id="RHEA-COMP:10100"/>
        <dbReference type="ChEBI" id="CHEBI:65314"/>
        <dbReference type="ChEBI" id="CHEBI:65315"/>
        <dbReference type="EC" id="5.4.99.24"/>
    </reaction>
</comment>
<comment type="similarity">
    <text evidence="3">Belongs to the pseudouridine synthase RluA family.</text>
</comment>
<reference key="1">
    <citation type="journal article" date="2006" name="PLoS Genet.">
        <title>Genome sequence of Rickettsia bellii illuminates the role of amoebae in gene exchanges between intracellular pathogens.</title>
        <authorList>
            <person name="Ogata H."/>
            <person name="La Scola B."/>
            <person name="Audic S."/>
            <person name="Renesto P."/>
            <person name="Blanc G."/>
            <person name="Robert C."/>
            <person name="Fournier P.-E."/>
            <person name="Claverie J.-M."/>
            <person name="Raoult D."/>
        </authorList>
    </citation>
    <scope>NUCLEOTIDE SEQUENCE [LARGE SCALE GENOMIC DNA]</scope>
    <source>
        <strain>RML369-C</strain>
    </source>
</reference>
<dbReference type="EC" id="5.4.99.24"/>
<dbReference type="EMBL" id="CP000087">
    <property type="protein sequence ID" value="ABE04337.1"/>
    <property type="molecule type" value="Genomic_DNA"/>
</dbReference>
<dbReference type="RefSeq" id="WP_011476949.1">
    <property type="nucleotide sequence ID" value="NC_007940.1"/>
</dbReference>
<dbReference type="SMR" id="Q1RJX7"/>
<dbReference type="KEGG" id="rbe:RBE_0256"/>
<dbReference type="eggNOG" id="COG0564">
    <property type="taxonomic scope" value="Bacteria"/>
</dbReference>
<dbReference type="HOGENOM" id="CLU_016902_1_2_5"/>
<dbReference type="OrthoDB" id="9807829at2"/>
<dbReference type="Proteomes" id="UP000001951">
    <property type="component" value="Chromosome"/>
</dbReference>
<dbReference type="GO" id="GO:0160141">
    <property type="term" value="F:23S rRNA pseudouridine(955/2504/2580) synthase activity"/>
    <property type="evidence" value="ECO:0007669"/>
    <property type="project" value="UniProtKB-EC"/>
</dbReference>
<dbReference type="GO" id="GO:0003723">
    <property type="term" value="F:RNA binding"/>
    <property type="evidence" value="ECO:0007669"/>
    <property type="project" value="UniProtKB-KW"/>
</dbReference>
<dbReference type="GO" id="GO:0000455">
    <property type="term" value="P:enzyme-directed rRNA pseudouridine synthesis"/>
    <property type="evidence" value="ECO:0007669"/>
    <property type="project" value="UniProtKB-ARBA"/>
</dbReference>
<dbReference type="CDD" id="cd02869">
    <property type="entry name" value="PseudoU_synth_RluA_like"/>
    <property type="match status" value="1"/>
</dbReference>
<dbReference type="CDD" id="cd00165">
    <property type="entry name" value="S4"/>
    <property type="match status" value="1"/>
</dbReference>
<dbReference type="Gene3D" id="3.30.2350.10">
    <property type="entry name" value="Pseudouridine synthase"/>
    <property type="match status" value="1"/>
</dbReference>
<dbReference type="Gene3D" id="3.10.290.10">
    <property type="entry name" value="RNA-binding S4 domain"/>
    <property type="match status" value="1"/>
</dbReference>
<dbReference type="InterPro" id="IPR020103">
    <property type="entry name" value="PsdUridine_synth_cat_dom_sf"/>
</dbReference>
<dbReference type="InterPro" id="IPR006224">
    <property type="entry name" value="PsdUridine_synth_RluA-like_CS"/>
</dbReference>
<dbReference type="InterPro" id="IPR006145">
    <property type="entry name" value="PsdUridine_synth_RsuA/RluA"/>
</dbReference>
<dbReference type="InterPro" id="IPR050188">
    <property type="entry name" value="RluA_PseudoU_synthase"/>
</dbReference>
<dbReference type="InterPro" id="IPR002942">
    <property type="entry name" value="S4_RNA-bd"/>
</dbReference>
<dbReference type="InterPro" id="IPR036986">
    <property type="entry name" value="S4_RNA-bd_sf"/>
</dbReference>
<dbReference type="PANTHER" id="PTHR21600">
    <property type="entry name" value="MITOCHONDRIAL RNA PSEUDOURIDINE SYNTHASE"/>
    <property type="match status" value="1"/>
</dbReference>
<dbReference type="PANTHER" id="PTHR21600:SF83">
    <property type="entry name" value="PSEUDOURIDYLATE SYNTHASE RPUSD4, MITOCHONDRIAL"/>
    <property type="match status" value="1"/>
</dbReference>
<dbReference type="Pfam" id="PF00849">
    <property type="entry name" value="PseudoU_synth_2"/>
    <property type="match status" value="1"/>
</dbReference>
<dbReference type="Pfam" id="PF01479">
    <property type="entry name" value="S4"/>
    <property type="match status" value="1"/>
</dbReference>
<dbReference type="SMART" id="SM00363">
    <property type="entry name" value="S4"/>
    <property type="match status" value="1"/>
</dbReference>
<dbReference type="SUPFAM" id="SSF55174">
    <property type="entry name" value="Alpha-L RNA-binding motif"/>
    <property type="match status" value="1"/>
</dbReference>
<dbReference type="SUPFAM" id="SSF55120">
    <property type="entry name" value="Pseudouridine synthase"/>
    <property type="match status" value="1"/>
</dbReference>
<dbReference type="PROSITE" id="PS01129">
    <property type="entry name" value="PSI_RLU"/>
    <property type="match status" value="1"/>
</dbReference>
<dbReference type="PROSITE" id="PS50889">
    <property type="entry name" value="S4"/>
    <property type="match status" value="1"/>
</dbReference>
<gene>
    <name type="primary">rluC</name>
    <name type="ordered locus">RBE_0256</name>
</gene>